<dbReference type="EC" id="3.5.4.38"/>
<dbReference type="EMBL" id="AY622597">
    <property type="protein sequence ID" value="AAT44387.1"/>
    <property type="molecule type" value="Genomic_DNA"/>
</dbReference>
<dbReference type="EMBL" id="AY622594">
    <property type="protein sequence ID" value="AAT44387.1"/>
    <property type="status" value="JOINED"/>
    <property type="molecule type" value="Genomic_DNA"/>
</dbReference>
<dbReference type="EMBL" id="AY622595">
    <property type="protein sequence ID" value="AAT44387.1"/>
    <property type="status" value="JOINED"/>
    <property type="molecule type" value="Genomic_DNA"/>
</dbReference>
<dbReference type="EMBL" id="AY622596">
    <property type="protein sequence ID" value="AAT44387.1"/>
    <property type="status" value="JOINED"/>
    <property type="molecule type" value="Genomic_DNA"/>
</dbReference>
<dbReference type="SMR" id="Q694B5"/>
<dbReference type="FunCoup" id="Q694B5">
    <property type="interactions" value="247"/>
</dbReference>
<dbReference type="STRING" id="9593.ENSGGOP00000019427"/>
<dbReference type="InParanoid" id="Q694B5"/>
<dbReference type="Proteomes" id="UP000001519">
    <property type="component" value="Unplaced"/>
</dbReference>
<dbReference type="GO" id="GO:0005737">
    <property type="term" value="C:cytoplasm"/>
    <property type="evidence" value="ECO:0000250"/>
    <property type="project" value="UniProtKB"/>
</dbReference>
<dbReference type="GO" id="GO:0005634">
    <property type="term" value="C:nucleus"/>
    <property type="evidence" value="ECO:0000250"/>
    <property type="project" value="UniProtKB"/>
</dbReference>
<dbReference type="GO" id="GO:0000932">
    <property type="term" value="C:P-body"/>
    <property type="evidence" value="ECO:0000318"/>
    <property type="project" value="GO_Central"/>
</dbReference>
<dbReference type="GO" id="GO:0004126">
    <property type="term" value="F:cytidine deaminase activity"/>
    <property type="evidence" value="ECO:0000318"/>
    <property type="project" value="GO_Central"/>
</dbReference>
<dbReference type="GO" id="GO:0003723">
    <property type="term" value="F:RNA binding"/>
    <property type="evidence" value="ECO:0000318"/>
    <property type="project" value="GO_Central"/>
</dbReference>
<dbReference type="GO" id="GO:0008270">
    <property type="term" value="F:zinc ion binding"/>
    <property type="evidence" value="ECO:0007669"/>
    <property type="project" value="InterPro"/>
</dbReference>
<dbReference type="GO" id="GO:0009972">
    <property type="term" value="P:cytidine deamination"/>
    <property type="evidence" value="ECO:0000250"/>
    <property type="project" value="UniProtKB"/>
</dbReference>
<dbReference type="GO" id="GO:0016554">
    <property type="term" value="P:cytidine to uridine editing"/>
    <property type="evidence" value="ECO:0000318"/>
    <property type="project" value="GO_Central"/>
</dbReference>
<dbReference type="GO" id="GO:0051607">
    <property type="term" value="P:defense response to virus"/>
    <property type="evidence" value="ECO:0000318"/>
    <property type="project" value="GO_Central"/>
</dbReference>
<dbReference type="GO" id="GO:0070383">
    <property type="term" value="P:DNA cytosine deamination"/>
    <property type="evidence" value="ECO:0000318"/>
    <property type="project" value="GO_Central"/>
</dbReference>
<dbReference type="GO" id="GO:0045087">
    <property type="term" value="P:innate immune response"/>
    <property type="evidence" value="ECO:0007669"/>
    <property type="project" value="UniProtKB-KW"/>
</dbReference>
<dbReference type="GO" id="GO:0045869">
    <property type="term" value="P:negative regulation of single stranded viral RNA replication via double stranded DNA intermediate"/>
    <property type="evidence" value="ECO:0000318"/>
    <property type="project" value="GO_Central"/>
</dbReference>
<dbReference type="GO" id="GO:0044029">
    <property type="term" value="P:positive regulation of gene expression via chromosomal CpG island demethylation"/>
    <property type="evidence" value="ECO:0000250"/>
    <property type="project" value="UniProtKB"/>
</dbReference>
<dbReference type="GO" id="GO:0010526">
    <property type="term" value="P:transposable element silencing"/>
    <property type="evidence" value="ECO:0000250"/>
    <property type="project" value="UniProtKB"/>
</dbReference>
<dbReference type="CDD" id="cd01283">
    <property type="entry name" value="cytidine_deaminase"/>
    <property type="match status" value="1"/>
</dbReference>
<dbReference type="FunFam" id="3.40.140.10:FF:000029">
    <property type="entry name" value="DNA dC-&gt;dU-editing enzyme APOBEC-3G"/>
    <property type="match status" value="1"/>
</dbReference>
<dbReference type="Gene3D" id="3.40.140.10">
    <property type="entry name" value="Cytidine Deaminase, domain 2"/>
    <property type="match status" value="1"/>
</dbReference>
<dbReference type="InterPro" id="IPR016192">
    <property type="entry name" value="APOBEC/CMP_deaminase_Zn-bd"/>
</dbReference>
<dbReference type="InterPro" id="IPR050610">
    <property type="entry name" value="APOBEC_Cyt_Deaminase"/>
</dbReference>
<dbReference type="InterPro" id="IPR002125">
    <property type="entry name" value="CMP_dCMP_dom"/>
</dbReference>
<dbReference type="InterPro" id="IPR016193">
    <property type="entry name" value="Cytidine_deaminase-like"/>
</dbReference>
<dbReference type="PANTHER" id="PTHR13857:SF46">
    <property type="entry name" value="DNA DC-DU-EDITING ENZYME APOBEC-3C"/>
    <property type="match status" value="1"/>
</dbReference>
<dbReference type="PANTHER" id="PTHR13857">
    <property type="entry name" value="MRNA EDITING ENZYME"/>
    <property type="match status" value="1"/>
</dbReference>
<dbReference type="Pfam" id="PF18782">
    <property type="entry name" value="NAD2"/>
    <property type="match status" value="1"/>
</dbReference>
<dbReference type="SUPFAM" id="SSF53927">
    <property type="entry name" value="Cytidine deaminase-like"/>
    <property type="match status" value="1"/>
</dbReference>
<dbReference type="PROSITE" id="PS00903">
    <property type="entry name" value="CYT_DCMP_DEAMINASES_1"/>
    <property type="match status" value="1"/>
</dbReference>
<dbReference type="PROSITE" id="PS51747">
    <property type="entry name" value="CYT_DCMP_DEAMINASES_2"/>
    <property type="match status" value="1"/>
</dbReference>
<comment type="function">
    <text evidence="1">DNA deaminase (cytidine deaminase) which acts as an inhibitor of retrovirus replication and retrotransposon mobility via deaminase-dependent and -independent mechanisms. May also play a role in the epigenetic regulation of gene expression through the process of active DNA demethylation (By similarity).</text>
</comment>
<comment type="catalytic activity">
    <reaction>
        <text>a 2'-deoxycytidine in single-stranded DNA + H2O + H(+) = a 2'-deoxyuridine in single-stranded DNA + NH4(+)</text>
        <dbReference type="Rhea" id="RHEA:50948"/>
        <dbReference type="Rhea" id="RHEA-COMP:12846"/>
        <dbReference type="Rhea" id="RHEA-COMP:12847"/>
        <dbReference type="ChEBI" id="CHEBI:15377"/>
        <dbReference type="ChEBI" id="CHEBI:15378"/>
        <dbReference type="ChEBI" id="CHEBI:28938"/>
        <dbReference type="ChEBI" id="CHEBI:85452"/>
        <dbReference type="ChEBI" id="CHEBI:133902"/>
        <dbReference type="EC" id="3.5.4.38"/>
    </reaction>
</comment>
<comment type="cofactor">
    <cofactor evidence="1">
        <name>Zn(2+)</name>
        <dbReference type="ChEBI" id="CHEBI:29105"/>
    </cofactor>
</comment>
<comment type="subunit">
    <text evidence="1">Homodimer. Interacts with TRIB3 (By similarity).</text>
</comment>
<comment type="subcellular location">
    <subcellularLocation>
        <location evidence="1">Nucleus</location>
    </subcellularLocation>
    <subcellularLocation>
        <location evidence="1">Cytoplasm</location>
    </subcellularLocation>
</comment>
<comment type="similarity">
    <text evidence="4">Belongs to the cytidine and deoxycytidylate deaminase family.</text>
</comment>
<protein>
    <recommendedName>
        <fullName>DNA dC-&gt;dU-editing enzyme APOBEC-3C</fullName>
        <shortName>A3C</shortName>
        <ecNumber>3.5.4.38</ecNumber>
    </recommendedName>
</protein>
<gene>
    <name type="primary">APOBEC3C</name>
</gene>
<reference key="1">
    <citation type="journal article" date="2004" name="PLoS Biol.">
        <title>Ancient adaptive evolution of the primate antiviral DNA-editing enzyme APOBEC3G.</title>
        <authorList>
            <person name="Sawyer S.L."/>
            <person name="Emerman M."/>
            <person name="Malik H.S."/>
        </authorList>
    </citation>
    <scope>NUCLEOTIDE SEQUENCE [GENOMIC DNA]</scope>
</reference>
<keyword id="KW-0051">Antiviral defense</keyword>
<keyword id="KW-0963">Cytoplasm</keyword>
<keyword id="KW-0378">Hydrolase</keyword>
<keyword id="KW-0391">Immunity</keyword>
<keyword id="KW-0399">Innate immunity</keyword>
<keyword id="KW-0479">Metal-binding</keyword>
<keyword id="KW-0539">Nucleus</keyword>
<keyword id="KW-1185">Reference proteome</keyword>
<keyword id="KW-0862">Zinc</keyword>
<proteinExistence type="inferred from homology"/>
<accession>Q694B5</accession>
<evidence type="ECO:0000250" key="1"/>
<evidence type="ECO:0000250" key="2">
    <source>
        <dbReference type="UniProtKB" id="Q9NRW3"/>
    </source>
</evidence>
<evidence type="ECO:0000255" key="3">
    <source>
        <dbReference type="PROSITE-ProRule" id="PRU01083"/>
    </source>
</evidence>
<evidence type="ECO:0000305" key="4"/>
<sequence>MNPQIRNPMKAMYPGTFYFQFKNLWEANDRNETWLCFTVEGIKRRSVVSWKTGVFRNQVDSETHCHAERCFLSWFCDDILSPNTNYQVTWYTSWSPCPECAGEVAEFLARHSNVNLTIFTARLYYFQDTDYQEGLRSLSQEGVAVKIMDYKDFKYCWENFVYNDDEPFKPWKGLKYNFRFLKRRLQEILE</sequence>
<feature type="chain" id="PRO_0000171754" description="DNA dC-&gt;dU-editing enzyme APOBEC-3C">
    <location>
        <begin position="1"/>
        <end position="190"/>
    </location>
</feature>
<feature type="domain" description="CMP/dCMP-type deaminase" evidence="3">
    <location>
        <begin position="29"/>
        <end position="138"/>
    </location>
</feature>
<feature type="binding site" evidence="2">
    <location>
        <position position="66"/>
    </location>
    <ligand>
        <name>Zn(2+)</name>
        <dbReference type="ChEBI" id="CHEBI:29105"/>
        <note>catalytic</note>
    </ligand>
</feature>
<feature type="binding site" evidence="2">
    <location>
        <position position="97"/>
    </location>
    <ligand>
        <name>Zn(2+)</name>
        <dbReference type="ChEBI" id="CHEBI:29105"/>
        <note>catalytic</note>
    </ligand>
</feature>
<feature type="binding site" evidence="2">
    <location>
        <position position="100"/>
    </location>
    <ligand>
        <name>Zn(2+)</name>
        <dbReference type="ChEBI" id="CHEBI:29105"/>
        <note>catalytic</note>
    </ligand>
</feature>
<organism>
    <name type="scientific">Gorilla gorilla gorilla</name>
    <name type="common">Western lowland gorilla</name>
    <dbReference type="NCBI Taxonomy" id="9595"/>
    <lineage>
        <taxon>Eukaryota</taxon>
        <taxon>Metazoa</taxon>
        <taxon>Chordata</taxon>
        <taxon>Craniata</taxon>
        <taxon>Vertebrata</taxon>
        <taxon>Euteleostomi</taxon>
        <taxon>Mammalia</taxon>
        <taxon>Eutheria</taxon>
        <taxon>Euarchontoglires</taxon>
        <taxon>Primates</taxon>
        <taxon>Haplorrhini</taxon>
        <taxon>Catarrhini</taxon>
        <taxon>Hominidae</taxon>
        <taxon>Gorilla</taxon>
    </lineage>
</organism>
<name>ABC3C_GORGO</name>